<protein>
    <recommendedName>
        <fullName>NADH-ubiquinone oxidoreductase chain 6</fullName>
        <ecNumber>7.1.1.2</ecNumber>
    </recommendedName>
    <alternativeName>
        <fullName>NADH dehydrogenase subunit 6</fullName>
    </alternativeName>
</protein>
<keyword id="KW-0249">Electron transport</keyword>
<keyword id="KW-0472">Membrane</keyword>
<keyword id="KW-0496">Mitochondrion</keyword>
<keyword id="KW-0520">NAD</keyword>
<keyword id="KW-1185">Reference proteome</keyword>
<keyword id="KW-0679">Respiratory chain</keyword>
<keyword id="KW-1278">Translocase</keyword>
<keyword id="KW-0812">Transmembrane</keyword>
<keyword id="KW-1133">Transmembrane helix</keyword>
<keyword id="KW-0813">Transport</keyword>
<keyword id="KW-0830">Ubiquinone</keyword>
<dbReference type="EC" id="7.1.1.2"/>
<dbReference type="EMBL" id="EU352212">
    <property type="protein sequence ID" value="ABY51633.1"/>
    <property type="molecule type" value="Genomic_DNA"/>
</dbReference>
<dbReference type="RefSeq" id="YP_001649172.1">
    <property type="nucleotide sequence ID" value="NC_010241.1"/>
</dbReference>
<dbReference type="SMR" id="B0FWD6"/>
<dbReference type="FunCoup" id="B0FWD6">
    <property type="interactions" value="125"/>
</dbReference>
<dbReference type="STRING" id="7159.B0FWD6"/>
<dbReference type="PaxDb" id="7159-AAEL018684-PA"/>
<dbReference type="VEuPathDB" id="VectorBase:AAEL018684"/>
<dbReference type="eggNOG" id="ENOG502TCTS">
    <property type="taxonomic scope" value="Eukaryota"/>
</dbReference>
<dbReference type="HOGENOM" id="CLU_1548873_0_0_1"/>
<dbReference type="InParanoid" id="B0FWD6"/>
<dbReference type="OrthoDB" id="6377199at2759"/>
<dbReference type="Proteomes" id="UP000008820">
    <property type="component" value="Mitochondrion MT"/>
</dbReference>
<dbReference type="Proteomes" id="UP000682892">
    <property type="component" value="Mitochondrion MT"/>
</dbReference>
<dbReference type="GO" id="GO:0031966">
    <property type="term" value="C:mitochondrial membrane"/>
    <property type="evidence" value="ECO:0007669"/>
    <property type="project" value="UniProtKB-SubCell"/>
</dbReference>
<dbReference type="GO" id="GO:0008137">
    <property type="term" value="F:NADH dehydrogenase (ubiquinone) activity"/>
    <property type="evidence" value="ECO:0007669"/>
    <property type="project" value="UniProtKB-EC"/>
</dbReference>
<dbReference type="InterPro" id="IPR050269">
    <property type="entry name" value="ComplexI_Subunit6"/>
</dbReference>
<dbReference type="PANTHER" id="PTHR11435">
    <property type="entry name" value="NADH UBIQUINONE OXIDOREDUCTASE SUBUNIT ND6"/>
    <property type="match status" value="1"/>
</dbReference>
<dbReference type="PANTHER" id="PTHR11435:SF1">
    <property type="entry name" value="NADH-UBIQUINONE OXIDOREDUCTASE CHAIN 6"/>
    <property type="match status" value="1"/>
</dbReference>
<reference evidence="5" key="1">
    <citation type="submission" date="2007-12" db="EMBL/GenBank/DDBJ databases">
        <title>The mitochondrial genome of the Yellow fever mosquito - Aedes aegypti.</title>
        <authorList>
            <person name="Lobo N.F."/>
            <person name="Lovin D."/>
            <person name="DeBruyn B."/>
            <person name="Puiu D."/>
            <person name="Shumway M."/>
            <person name="Haas B."/>
            <person name="Nene V."/>
            <person name="Severson D.W."/>
        </authorList>
    </citation>
    <scope>NUCLEOTIDE SEQUENCE [LARGE SCALE GENOMIC DNA]</scope>
    <source>
        <strain evidence="5">LVPib12</strain>
    </source>
</reference>
<geneLocation type="mitochondrion" evidence="5"/>
<organism>
    <name type="scientific">Aedes aegypti</name>
    <name type="common">Yellowfever mosquito</name>
    <name type="synonym">Culex aegypti</name>
    <dbReference type="NCBI Taxonomy" id="7159"/>
    <lineage>
        <taxon>Eukaryota</taxon>
        <taxon>Metazoa</taxon>
        <taxon>Ecdysozoa</taxon>
        <taxon>Arthropoda</taxon>
        <taxon>Hexapoda</taxon>
        <taxon>Insecta</taxon>
        <taxon>Pterygota</taxon>
        <taxon>Neoptera</taxon>
        <taxon>Endopterygota</taxon>
        <taxon>Diptera</taxon>
        <taxon>Nematocera</taxon>
        <taxon>Culicoidea</taxon>
        <taxon>Culicidae</taxon>
        <taxon>Culicinae</taxon>
        <taxon>Aedini</taxon>
        <taxon>Aedes</taxon>
        <taxon>Stegomyia</taxon>
    </lineage>
</organism>
<sequence length="173" mass="20189">MMTLIMLISLITSFIFMQMKHPLAMGLMLLIQTFLTSLLTGMFVKTFWFSYVLFLIFMGGMLVLFIYVTSLSSNEMFSLSMKLFFLSLSMILMFIVFSFFFDKSIISMFINNNEMNNLFSTNSLMMEDLISLNKMYNFPTNLITLLLINYLFLTLLVTVKITKKNYGPLRPMN</sequence>
<feature type="chain" id="PRO_0000372689" description="NADH-ubiquinone oxidoreductase chain 6">
    <location>
        <begin position="1"/>
        <end position="173"/>
    </location>
</feature>
<feature type="transmembrane region" description="Helical" evidence="3">
    <location>
        <begin position="24"/>
        <end position="44"/>
    </location>
</feature>
<feature type="transmembrane region" description="Helical" evidence="3">
    <location>
        <begin position="47"/>
        <end position="67"/>
    </location>
</feature>
<feature type="transmembrane region" description="Helical" evidence="3">
    <location>
        <begin position="81"/>
        <end position="101"/>
    </location>
</feature>
<feature type="transmembrane region" description="Helical" evidence="3">
    <location>
        <begin position="142"/>
        <end position="162"/>
    </location>
</feature>
<evidence type="ECO:0000250" key="1"/>
<evidence type="ECO:0000250" key="2">
    <source>
        <dbReference type="UniProtKB" id="P18933"/>
    </source>
</evidence>
<evidence type="ECO:0000255" key="3"/>
<evidence type="ECO:0000305" key="4"/>
<evidence type="ECO:0000312" key="5">
    <source>
        <dbReference type="EMBL" id="ABY51633.1"/>
    </source>
</evidence>
<name>NU6M_AEDAE</name>
<accession>B0FWD6</accession>
<comment type="function">
    <text evidence="1 4">Core subunit of the mitochondrial membrane respiratory chain NADH dehydrogenase (Complex I) that is believed to belong to the minimal assembly required for catalysis. Complex I functions in the transfer of electrons from NADH to the respiratory chain. The immediate electron acceptor for the enzyme is believed to be ubiquinone (By similarity).</text>
</comment>
<comment type="catalytic activity">
    <reaction>
        <text>a ubiquinone + NADH + 5 H(+)(in) = a ubiquinol + NAD(+) + 4 H(+)(out)</text>
        <dbReference type="Rhea" id="RHEA:29091"/>
        <dbReference type="Rhea" id="RHEA-COMP:9565"/>
        <dbReference type="Rhea" id="RHEA-COMP:9566"/>
        <dbReference type="ChEBI" id="CHEBI:15378"/>
        <dbReference type="ChEBI" id="CHEBI:16389"/>
        <dbReference type="ChEBI" id="CHEBI:17976"/>
        <dbReference type="ChEBI" id="CHEBI:57540"/>
        <dbReference type="ChEBI" id="CHEBI:57945"/>
        <dbReference type="EC" id="7.1.1.2"/>
    </reaction>
</comment>
<comment type="subcellular location">
    <subcellularLocation>
        <location evidence="4">Mitochondrion membrane</location>
        <topology evidence="4">Multi-pass membrane protein</topology>
    </subcellularLocation>
</comment>
<comment type="similarity">
    <text evidence="3">Belongs to the complex I subunit 6 family.</text>
</comment>
<gene>
    <name evidence="2" type="primary">mt:ND6</name>
    <name evidence="5" type="synonym">ND6</name>
</gene>
<proteinExistence type="inferred from homology"/>